<accession>Q66285</accession>
<dbReference type="EMBL" id="U59751">
    <property type="protein sequence ID" value="AAB03329.1"/>
    <property type="molecule type" value="Genomic_DNA"/>
</dbReference>
<dbReference type="RefSeq" id="NP_056850.1">
    <property type="nucleotide sequence ID" value="NC_001648.1"/>
</dbReference>
<dbReference type="SMR" id="Q66285"/>
<dbReference type="KEGG" id="vg:1403419"/>
<dbReference type="Proteomes" id="UP000002244">
    <property type="component" value="Genome"/>
</dbReference>
<dbReference type="GO" id="GO:0033644">
    <property type="term" value="C:host cell membrane"/>
    <property type="evidence" value="ECO:0007669"/>
    <property type="project" value="UniProtKB-SubCell"/>
</dbReference>
<dbReference type="GO" id="GO:0016020">
    <property type="term" value="C:membrane"/>
    <property type="evidence" value="ECO:0007669"/>
    <property type="project" value="UniProtKB-KW"/>
</dbReference>
<name>YP06_CSVMV</name>
<keyword id="KW-1043">Host membrane</keyword>
<keyword id="KW-0472">Membrane</keyword>
<keyword id="KW-1185">Reference proteome</keyword>
<keyword id="KW-0812">Transmembrane</keyword>
<keyword id="KW-1133">Transmembrane helix</keyword>
<protein>
    <recommendedName>
        <fullName>Uncharacterized 6 kDa protein</fullName>
    </recommendedName>
</protein>
<reference key="1">
    <citation type="journal article" date="1998" name="Arch. Virol.">
        <title>Cassava vein mosaic virus (CsVMV), type species for a new genus of plant double stranded DNA viruses?</title>
        <authorList>
            <person name="de Kochko A."/>
            <person name="Verdaguer B."/>
            <person name="Taylor N."/>
            <person name="Carcamo R."/>
            <person name="Beachy R.N."/>
            <person name="Fauquet C."/>
        </authorList>
    </citation>
    <scope>NUCLEOTIDE SEQUENCE [GENOMIC DNA]</scope>
</reference>
<reference key="2">
    <citation type="submission" date="1996-06" db="EMBL/GenBank/DDBJ databases">
        <authorList>
            <person name="Kochko de A."/>
            <person name="Verdaguer B."/>
            <person name="Beachy R.N."/>
            <person name="Fauquet C."/>
        </authorList>
    </citation>
    <scope>NUCLEOTIDE SEQUENCE [GENOMIC DNA]</scope>
</reference>
<sequence length="54" mass="6293">MKGIKCLSITCFLSDNSIIRVVLIRRMLKILLFSLLVLIILCFIDPILFYFICL</sequence>
<evidence type="ECO:0000255" key="1"/>
<evidence type="ECO:0000305" key="2"/>
<comment type="subcellular location">
    <subcellularLocation>
        <location evidence="2">Host membrane</location>
        <topology evidence="2">Single-pass membrane protein</topology>
    </subcellularLocation>
</comment>
<organism>
    <name type="scientific">Cassava vein mosaic virus</name>
    <name type="common">CsVMV</name>
    <dbReference type="NCBI Taxonomy" id="38062"/>
    <lineage>
        <taxon>Viruses</taxon>
        <taxon>Riboviria</taxon>
        <taxon>Pararnavirae</taxon>
        <taxon>Artverviricota</taxon>
        <taxon>Revtraviricetes</taxon>
        <taxon>Ortervirales</taxon>
        <taxon>Caulimoviridae</taxon>
        <taxon>Cavemovirus</taxon>
        <taxon>Cavemovirus venamanihotis</taxon>
    </lineage>
</organism>
<organismHost>
    <name type="scientific">Manihot esculenta</name>
    <name type="common">Cassava</name>
    <name type="synonym">Jatropha manihot</name>
    <dbReference type="NCBI Taxonomy" id="3983"/>
</organismHost>
<feature type="chain" id="PRO_0000397905" description="Uncharacterized 6 kDa protein">
    <location>
        <begin position="1"/>
        <end position="54"/>
    </location>
</feature>
<feature type="transmembrane region" description="Helical" evidence="1">
    <location>
        <begin position="32"/>
        <end position="52"/>
    </location>
</feature>
<gene>
    <name type="ORF">ORF 5</name>
</gene>
<proteinExistence type="predicted"/>